<organism>
    <name type="scientific">Methanothermobacter thermautotrophicus (strain ATCC 29096 / DSM 1053 / JCM 10044 / NBRC 100330 / Delta H)</name>
    <name type="common">Methanobacterium thermoautotrophicum</name>
    <dbReference type="NCBI Taxonomy" id="187420"/>
    <lineage>
        <taxon>Archaea</taxon>
        <taxon>Methanobacteriati</taxon>
        <taxon>Methanobacteriota</taxon>
        <taxon>Methanomada group</taxon>
        <taxon>Methanobacteria</taxon>
        <taxon>Methanobacteriales</taxon>
        <taxon>Methanobacteriaceae</taxon>
        <taxon>Methanothermobacter</taxon>
    </lineage>
</organism>
<reference key="1">
    <citation type="journal article" date="1989" name="Proc. Natl. Acad. Sci. U.S.A.">
        <title>A hydrogenase-linked gene in Methanobacterium thermoautotrophicum strain delta H encodes a polyferredoxin.</title>
        <authorList>
            <person name="Reeve J.N."/>
            <person name="Beckler G.S."/>
            <person name="Cram D.S."/>
            <person name="Hamilton P.T."/>
            <person name="Brown J.W."/>
            <person name="Krzycki J.A."/>
            <person name="Kolodziej A.F."/>
            <person name="Alex L."/>
            <person name="Orme-Johnson W.H."/>
            <person name="Walsh C.T."/>
        </authorList>
    </citation>
    <scope>NUCLEOTIDE SEQUENCE [GENOMIC DNA]</scope>
    <source>
        <strain>ATCC 29096 / DSM 1053 / JCM 10044 / NBRC 100330 / Delta H</strain>
    </source>
</reference>
<reference key="2">
    <citation type="journal article" date="1997" name="J. Bacteriol.">
        <title>Complete genome sequence of Methanobacterium thermoautotrophicum deltaH: functional analysis and comparative genomics.</title>
        <authorList>
            <person name="Smith D.R."/>
            <person name="Doucette-Stamm L.A."/>
            <person name="Deloughery C."/>
            <person name="Lee H.-M."/>
            <person name="Dubois J."/>
            <person name="Aldredge T."/>
            <person name="Bashirzadeh R."/>
            <person name="Blakely D."/>
            <person name="Cook R."/>
            <person name="Gilbert K."/>
            <person name="Harrison D."/>
            <person name="Hoang L."/>
            <person name="Keagle P."/>
            <person name="Lumm W."/>
            <person name="Pothier B."/>
            <person name="Qiu D."/>
            <person name="Spadafora R."/>
            <person name="Vicare R."/>
            <person name="Wang Y."/>
            <person name="Wierzbowski J."/>
            <person name="Gibson R."/>
            <person name="Jiwani N."/>
            <person name="Caruso A."/>
            <person name="Bush D."/>
            <person name="Safer H."/>
            <person name="Patwell D."/>
            <person name="Prabhakar S."/>
            <person name="McDougall S."/>
            <person name="Shimer G."/>
            <person name="Goyal A."/>
            <person name="Pietrovski S."/>
            <person name="Church G.M."/>
            <person name="Daniels C.J."/>
            <person name="Mao J.-I."/>
            <person name="Rice P."/>
            <person name="Noelling J."/>
            <person name="Reeve J.N."/>
        </authorList>
    </citation>
    <scope>NUCLEOTIDE SEQUENCE [LARGE SCALE GENOMIC DNA]</scope>
    <source>
        <strain>ATCC 29096 / DSM 1053 / JCM 10044 / NBRC 100330 / Delta H</strain>
    </source>
</reference>
<sequence length="472" mass="52916">MVKLTMEPVTRIEGHAKITVHLDDAGNVEDTRLHVMEFRGFEKFLQGRPIEEAPRIVPRICGICDVQHHLAAAKAVDACFGFEPEDVLPAAYKMREIMNWGSYMHSHGLHFYFLAAPDFIAGKDRKTRNVFQIIKDAPDIALQAIELRKNALELVRATGGRPIHPTSSTPGGISTELDDETQKDLLKKAQRNVELAEATLELAVPIFEENIDLVNSLGNIETYHTGLVKDGVWDVYDGIVRIKDKEGNMFREFKPADYADTIAEHVKPYSWLKFPYIKDLGYPDGVYRVSPLSRLNVADKMPDAAPKAQEHFKEFRENFGYAQQTLLYHWARLIELLACAECAADALEGDLSGEKFPDSLERQAGDGVGIVEAPRGTLTHHYTCDENGLITKANIVVATIQNNPAMEMGIQKVAQDYIKPGVEVDDKIFNLMEMVIRAYDPCLSCATHTIDSQMRLATLEVYDSEGDLVKRI</sequence>
<accession>Q50783</accession>
<accession>O27206</accession>
<dbReference type="EC" id="1.12.99.-"/>
<dbReference type="EMBL" id="J04540">
    <property type="protein sequence ID" value="AAB02351.1"/>
    <property type="molecule type" value="Genomic_DNA"/>
</dbReference>
<dbReference type="EMBL" id="AE000666">
    <property type="protein sequence ID" value="AAB85623.1"/>
    <property type="molecule type" value="Genomic_DNA"/>
</dbReference>
<dbReference type="PIR" id="A69018">
    <property type="entry name" value="A69018"/>
</dbReference>
<dbReference type="PIR" id="F30315">
    <property type="entry name" value="F30315"/>
</dbReference>
<dbReference type="RefSeq" id="WP_010876758.1">
    <property type="nucleotide sequence ID" value="NC_000916.1"/>
</dbReference>
<dbReference type="SMR" id="Q50783"/>
<dbReference type="FunCoup" id="Q50783">
    <property type="interactions" value="69"/>
</dbReference>
<dbReference type="IntAct" id="Q50783">
    <property type="interactions" value="2"/>
</dbReference>
<dbReference type="STRING" id="187420.MTH_1134"/>
<dbReference type="PaxDb" id="187420-MTH_1134"/>
<dbReference type="EnsemblBacteria" id="AAB85623">
    <property type="protein sequence ID" value="AAB85623"/>
    <property type="gene ID" value="MTH_1134"/>
</dbReference>
<dbReference type="GeneID" id="1471542"/>
<dbReference type="GeneID" id="77401663"/>
<dbReference type="KEGG" id="mth:MTH_1134"/>
<dbReference type="PATRIC" id="fig|187420.15.peg.1111"/>
<dbReference type="HOGENOM" id="CLU_044556_0_0_2"/>
<dbReference type="InParanoid" id="Q50783"/>
<dbReference type="BioCyc" id="MetaCyc:MVHAMAUTO-MONOMER"/>
<dbReference type="Proteomes" id="UP000005223">
    <property type="component" value="Chromosome"/>
</dbReference>
<dbReference type="GO" id="GO:0008901">
    <property type="term" value="F:ferredoxin hydrogenase activity"/>
    <property type="evidence" value="ECO:0007669"/>
    <property type="project" value="InterPro"/>
</dbReference>
<dbReference type="GO" id="GO:0016151">
    <property type="term" value="F:nickel cation binding"/>
    <property type="evidence" value="ECO:0007669"/>
    <property type="project" value="InterPro"/>
</dbReference>
<dbReference type="Gene3D" id="1.10.645.10">
    <property type="entry name" value="Cytochrome-c3 Hydrogenase, chain B"/>
    <property type="match status" value="1"/>
</dbReference>
<dbReference type="InterPro" id="IPR001501">
    <property type="entry name" value="Ni-dep_hyd_lsu"/>
</dbReference>
<dbReference type="InterPro" id="IPR018194">
    <property type="entry name" value="Ni-dep_hyd_lsu_Ni_BS"/>
</dbReference>
<dbReference type="InterPro" id="IPR029014">
    <property type="entry name" value="NiFe-Hase_large"/>
</dbReference>
<dbReference type="PANTHER" id="PTHR43600">
    <property type="entry name" value="COENZYME F420 HYDROGENASE, SUBUNIT ALPHA"/>
    <property type="match status" value="1"/>
</dbReference>
<dbReference type="PANTHER" id="PTHR43600:SF2">
    <property type="entry name" value="F420-NON-REDUCING HYDROGENASE VHU SUBUNIT A"/>
    <property type="match status" value="1"/>
</dbReference>
<dbReference type="Pfam" id="PF00374">
    <property type="entry name" value="NiFeSe_Hases"/>
    <property type="match status" value="2"/>
</dbReference>
<dbReference type="SUPFAM" id="SSF56762">
    <property type="entry name" value="HydB/Nqo4-like"/>
    <property type="match status" value="1"/>
</dbReference>
<dbReference type="PROSITE" id="PS00507">
    <property type="entry name" value="NI_HGENASE_L_1"/>
    <property type="match status" value="1"/>
</dbReference>
<dbReference type="PROSITE" id="PS00508">
    <property type="entry name" value="NI_HGENASE_L_2"/>
    <property type="match status" value="1"/>
</dbReference>
<feature type="chain" id="PRO_0000199726" description="F420-non-reducing hydrogenase subunit A">
    <location>
        <begin position="1"/>
        <end position="472"/>
    </location>
</feature>
<feature type="binding site" evidence="2">
    <location>
        <position position="61"/>
    </location>
    <ligand>
        <name>Ni(2+)</name>
        <dbReference type="ChEBI" id="CHEBI:49786"/>
    </ligand>
</feature>
<feature type="binding site" evidence="2">
    <location>
        <position position="64"/>
    </location>
    <ligand>
        <name>Ni(2+)</name>
        <dbReference type="ChEBI" id="CHEBI:49786"/>
    </ligand>
</feature>
<feature type="binding site" evidence="2">
    <location>
        <position position="442"/>
    </location>
    <ligand>
        <name>Ni(2+)</name>
        <dbReference type="ChEBI" id="CHEBI:49786"/>
    </ligand>
</feature>
<feature type="binding site" evidence="2">
    <location>
        <position position="445"/>
    </location>
    <ligand>
        <name>Ni(2+)</name>
        <dbReference type="ChEBI" id="CHEBI:49786"/>
    </ligand>
</feature>
<feature type="sequence conflict" description="In Ref. 1; AAB02351." evidence="3" ref="1">
    <original>H</original>
    <variation>R</variation>
    <location>
        <position position="21"/>
    </location>
</feature>
<feature type="sequence conflict" description="In Ref. 1; AAB02351." evidence="3" ref="1">
    <original>K</original>
    <variation>T</variation>
    <location>
        <position position="267"/>
    </location>
</feature>
<gene>
    <name type="primary">mvhA</name>
    <name type="ordered locus">MTH_1134</name>
</gene>
<comment type="function">
    <text evidence="1">Part of a complex that provides reducing equivalents for heterodisulfide reductase.</text>
</comment>
<comment type="cofactor">
    <cofactor evidence="3">
        <name>Ni(2+)</name>
        <dbReference type="ChEBI" id="CHEBI:49786"/>
    </cofactor>
</comment>
<comment type="subunit">
    <text evidence="1">The F420-non-reducing hydrogenase is composed of three subunits; MvhA, MvhD and MvhG. It forms a complex with the heterodisulfide reductase (hdr) (By similarity).</text>
</comment>
<comment type="similarity">
    <text evidence="3">Belongs to the [NiFe]/[NiFeSe] hydrogenase large subunit family.</text>
</comment>
<evidence type="ECO:0000250" key="1"/>
<evidence type="ECO:0000255" key="2"/>
<evidence type="ECO:0000305" key="3"/>
<protein>
    <recommendedName>
        <fullName>F420-non-reducing hydrogenase subunit A</fullName>
        <ecNumber>1.12.99.-</ecNumber>
    </recommendedName>
    <alternativeName>
        <fullName>Methyl viologen-reducing hydrogenase subunit alpha</fullName>
        <shortName>MVH subunit A</shortName>
    </alternativeName>
</protein>
<name>MVHA_METTH</name>
<keyword id="KW-0479">Metal-binding</keyword>
<keyword id="KW-0533">Nickel</keyword>
<keyword id="KW-0560">Oxidoreductase</keyword>
<keyword id="KW-1185">Reference proteome</keyword>
<proteinExistence type="inferred from homology"/>